<comment type="function">
    <text evidence="1">Oxidative deamination of D-amino acids.</text>
</comment>
<comment type="catalytic activity">
    <reaction evidence="1">
        <text>a D-alpha-amino acid + A + H2O = a 2-oxocarboxylate + AH2 + NH4(+)</text>
        <dbReference type="Rhea" id="RHEA:18125"/>
        <dbReference type="ChEBI" id="CHEBI:13193"/>
        <dbReference type="ChEBI" id="CHEBI:15377"/>
        <dbReference type="ChEBI" id="CHEBI:17499"/>
        <dbReference type="ChEBI" id="CHEBI:28938"/>
        <dbReference type="ChEBI" id="CHEBI:35179"/>
        <dbReference type="ChEBI" id="CHEBI:59871"/>
    </reaction>
</comment>
<comment type="cofactor">
    <cofactor evidence="1">
        <name>FAD</name>
        <dbReference type="ChEBI" id="CHEBI:57692"/>
    </cofactor>
</comment>
<comment type="pathway">
    <text>Amino-acid degradation; D-alanine degradation; NH(3) and pyruvate from D-alanine: step 1/1.</text>
</comment>
<comment type="similarity">
    <text evidence="1">Belongs to the DadA oxidoreductase family.</text>
</comment>
<protein>
    <recommendedName>
        <fullName evidence="1">D-amino acid dehydrogenase</fullName>
        <ecNumber evidence="1">1.4.99.-</ecNumber>
    </recommendedName>
</protein>
<evidence type="ECO:0000255" key="1">
    <source>
        <dbReference type="HAMAP-Rule" id="MF_01202"/>
    </source>
</evidence>
<feature type="chain" id="PRO_1000138663" description="D-amino acid dehydrogenase">
    <location>
        <begin position="1"/>
        <end position="432"/>
    </location>
</feature>
<feature type="binding site" evidence="1">
    <location>
        <begin position="3"/>
        <end position="17"/>
    </location>
    <ligand>
        <name>FAD</name>
        <dbReference type="ChEBI" id="CHEBI:57692"/>
    </ligand>
</feature>
<keyword id="KW-0274">FAD</keyword>
<keyword id="KW-0285">Flavoprotein</keyword>
<keyword id="KW-0560">Oxidoreductase</keyword>
<sequence>MRVVILGSGVVGVTSAWYLSQAGHDVTVIDRESGPAQETSAANAGQISPGYAAPWAAPGVPLKAIKWMFQRHAPLAVRLDGTPFQLKWMWQMLRNCDTRHYMENKGRMVRLAEYSRDCLKTLRAATGIEYEGRQGGTLQLFRTAQQYENATRDIAVLEDAGVPYQLLEASRLAEVEPALAEVAHKLTGGLRLPNDETGDCQLFTQRLARMAEQAGVTFRFNTPVEKLLYENDQIYGVKCADEIIKADAYVMAFGSYSTAMLKGIVDIPVYPLKGYSLTIPIVEPDGAPVSTILDETYKIAITRFDKRIRVGGMAEIVGFNTDLLQPRRETLEMVVRDLFPRGGHIEQATFWTGLRPMTPDGTPVVGRTRYKNLWLNTGHGTLGWTMACGSGQLLSDILSGRTPAIPYDDLSVARYRSDFTPTRPQRLHSAHN</sequence>
<reference key="1">
    <citation type="journal article" date="2011" name="J. Bacteriol.">
        <title>Comparative genomics of 28 Salmonella enterica isolates: evidence for CRISPR-mediated adaptive sublineage evolution.</title>
        <authorList>
            <person name="Fricke W.F."/>
            <person name="Mammel M.K."/>
            <person name="McDermott P.F."/>
            <person name="Tartera C."/>
            <person name="White D.G."/>
            <person name="Leclerc J.E."/>
            <person name="Ravel J."/>
            <person name="Cebula T.A."/>
        </authorList>
    </citation>
    <scope>NUCLEOTIDE SEQUENCE [LARGE SCALE GENOMIC DNA]</scope>
    <source>
        <strain>SL483</strain>
    </source>
</reference>
<gene>
    <name evidence="1" type="primary">dadA</name>
    <name type="ordered locus">SeAg_B1330</name>
</gene>
<organism>
    <name type="scientific">Salmonella agona (strain SL483)</name>
    <dbReference type="NCBI Taxonomy" id="454166"/>
    <lineage>
        <taxon>Bacteria</taxon>
        <taxon>Pseudomonadati</taxon>
        <taxon>Pseudomonadota</taxon>
        <taxon>Gammaproteobacteria</taxon>
        <taxon>Enterobacterales</taxon>
        <taxon>Enterobacteriaceae</taxon>
        <taxon>Salmonella</taxon>
    </lineage>
</organism>
<proteinExistence type="inferred from homology"/>
<dbReference type="EC" id="1.4.99.-" evidence="1"/>
<dbReference type="EMBL" id="CP001138">
    <property type="protein sequence ID" value="ACH50918.1"/>
    <property type="molecule type" value="Genomic_DNA"/>
</dbReference>
<dbReference type="RefSeq" id="WP_001266935.1">
    <property type="nucleotide sequence ID" value="NC_011149.1"/>
</dbReference>
<dbReference type="SMR" id="B5F4E4"/>
<dbReference type="KEGG" id="sea:SeAg_B1330"/>
<dbReference type="HOGENOM" id="CLU_007884_9_2_6"/>
<dbReference type="UniPathway" id="UPA00043">
    <property type="reaction ID" value="UER00498"/>
</dbReference>
<dbReference type="Proteomes" id="UP000008819">
    <property type="component" value="Chromosome"/>
</dbReference>
<dbReference type="GO" id="GO:0005737">
    <property type="term" value="C:cytoplasm"/>
    <property type="evidence" value="ECO:0007669"/>
    <property type="project" value="TreeGrafter"/>
</dbReference>
<dbReference type="GO" id="GO:0005886">
    <property type="term" value="C:plasma membrane"/>
    <property type="evidence" value="ECO:0007669"/>
    <property type="project" value="TreeGrafter"/>
</dbReference>
<dbReference type="GO" id="GO:0008718">
    <property type="term" value="F:D-amino-acid dehydrogenase activity"/>
    <property type="evidence" value="ECO:0007669"/>
    <property type="project" value="UniProtKB-UniRule"/>
</dbReference>
<dbReference type="GO" id="GO:0055130">
    <property type="term" value="P:D-alanine catabolic process"/>
    <property type="evidence" value="ECO:0007669"/>
    <property type="project" value="UniProtKB-UniPathway"/>
</dbReference>
<dbReference type="FunFam" id="3.50.50.60:FF:000020">
    <property type="entry name" value="D-amino acid dehydrogenase"/>
    <property type="match status" value="1"/>
</dbReference>
<dbReference type="Gene3D" id="3.30.9.10">
    <property type="entry name" value="D-Amino Acid Oxidase, subunit A, domain 2"/>
    <property type="match status" value="1"/>
</dbReference>
<dbReference type="Gene3D" id="3.50.50.60">
    <property type="entry name" value="FAD/NAD(P)-binding domain"/>
    <property type="match status" value="2"/>
</dbReference>
<dbReference type="HAMAP" id="MF_01202">
    <property type="entry name" value="DadA"/>
    <property type="match status" value="1"/>
</dbReference>
<dbReference type="InterPro" id="IPR023080">
    <property type="entry name" value="DadA"/>
</dbReference>
<dbReference type="InterPro" id="IPR006076">
    <property type="entry name" value="FAD-dep_OxRdtase"/>
</dbReference>
<dbReference type="InterPro" id="IPR036188">
    <property type="entry name" value="FAD/NAD-bd_sf"/>
</dbReference>
<dbReference type="NCBIfam" id="NF001933">
    <property type="entry name" value="PRK00711.1"/>
    <property type="match status" value="1"/>
</dbReference>
<dbReference type="PANTHER" id="PTHR13847:SF280">
    <property type="entry name" value="D-AMINO ACID DEHYDROGENASE"/>
    <property type="match status" value="1"/>
</dbReference>
<dbReference type="PANTHER" id="PTHR13847">
    <property type="entry name" value="SARCOSINE DEHYDROGENASE-RELATED"/>
    <property type="match status" value="1"/>
</dbReference>
<dbReference type="Pfam" id="PF01266">
    <property type="entry name" value="DAO"/>
    <property type="match status" value="1"/>
</dbReference>
<dbReference type="SUPFAM" id="SSF54373">
    <property type="entry name" value="FAD-linked reductases, C-terminal domain"/>
    <property type="match status" value="1"/>
</dbReference>
<dbReference type="SUPFAM" id="SSF51905">
    <property type="entry name" value="FAD/NAD(P)-binding domain"/>
    <property type="match status" value="1"/>
</dbReference>
<accession>B5F4E4</accession>
<name>DADA_SALA4</name>